<feature type="chain" id="PRO_0000063853" description="Nestin">
    <location>
        <begin position="1"/>
        <end position="1621"/>
    </location>
</feature>
<feature type="domain" description="IF rod" evidence="4">
    <location>
        <begin position="8"/>
        <end position="313"/>
    </location>
</feature>
<feature type="region of interest" description="Head">
    <location>
        <begin position="1"/>
        <end position="7"/>
    </location>
</feature>
<feature type="region of interest" description="Coil 1A">
    <location>
        <begin position="8"/>
        <end position="43"/>
    </location>
</feature>
<feature type="region of interest" description="Linker 1">
    <location>
        <begin position="44"/>
        <end position="55"/>
    </location>
</feature>
<feature type="region of interest" description="Coil 1B">
    <location>
        <begin position="56"/>
        <end position="151"/>
    </location>
</feature>
<feature type="region of interest" description="Linker 12">
    <location>
        <begin position="152"/>
        <end position="173"/>
    </location>
</feature>
<feature type="region of interest" description="Coil 2A">
    <location>
        <begin position="174"/>
        <end position="192"/>
    </location>
</feature>
<feature type="region of interest" description="Linker 2">
    <location>
        <begin position="193"/>
        <end position="195"/>
    </location>
</feature>
<feature type="region of interest" description="Coil 2B">
    <location>
        <begin position="196"/>
        <end position="313"/>
    </location>
</feature>
<feature type="region of interest" description="Tail">
    <location>
        <begin position="314"/>
        <end position="1621"/>
    </location>
</feature>
<feature type="region of interest" description="Disordered" evidence="5">
    <location>
        <begin position="439"/>
        <end position="490"/>
    </location>
</feature>
<feature type="region of interest" description="Disordered" evidence="5">
    <location>
        <begin position="670"/>
        <end position="788"/>
    </location>
</feature>
<feature type="region of interest" description="Disordered" evidence="5">
    <location>
        <begin position="895"/>
        <end position="1593"/>
    </location>
</feature>
<feature type="compositionally biased region" description="Basic and acidic residues" evidence="5">
    <location>
        <begin position="687"/>
        <end position="725"/>
    </location>
</feature>
<feature type="compositionally biased region" description="Basic and acidic residues" evidence="5">
    <location>
        <begin position="736"/>
        <end position="770"/>
    </location>
</feature>
<feature type="compositionally biased region" description="Basic and acidic residues" evidence="5">
    <location>
        <begin position="779"/>
        <end position="788"/>
    </location>
</feature>
<feature type="compositionally biased region" description="Basic and acidic residues" evidence="5">
    <location>
        <begin position="904"/>
        <end position="936"/>
    </location>
</feature>
<feature type="compositionally biased region" description="Basic and acidic residues" evidence="5">
    <location>
        <begin position="949"/>
        <end position="960"/>
    </location>
</feature>
<feature type="compositionally biased region" description="Basic and acidic residues" evidence="5">
    <location>
        <begin position="980"/>
        <end position="994"/>
    </location>
</feature>
<feature type="compositionally biased region" description="Basic and acidic residues" evidence="5">
    <location>
        <begin position="1012"/>
        <end position="1024"/>
    </location>
</feature>
<feature type="compositionally biased region" description="Low complexity" evidence="5">
    <location>
        <begin position="1085"/>
        <end position="1098"/>
    </location>
</feature>
<feature type="compositionally biased region" description="Gly residues" evidence="5">
    <location>
        <begin position="1099"/>
        <end position="1110"/>
    </location>
</feature>
<feature type="compositionally biased region" description="Basic and acidic residues" evidence="5">
    <location>
        <begin position="1129"/>
        <end position="1145"/>
    </location>
</feature>
<feature type="compositionally biased region" description="Basic and acidic residues" evidence="5">
    <location>
        <begin position="1159"/>
        <end position="1184"/>
    </location>
</feature>
<feature type="compositionally biased region" description="Acidic residues" evidence="5">
    <location>
        <begin position="1275"/>
        <end position="1292"/>
    </location>
</feature>
<feature type="compositionally biased region" description="Acidic residues" evidence="5">
    <location>
        <begin position="1409"/>
        <end position="1428"/>
    </location>
</feature>
<feature type="compositionally biased region" description="Low complexity" evidence="5">
    <location>
        <begin position="1440"/>
        <end position="1453"/>
    </location>
</feature>
<feature type="compositionally biased region" description="Low complexity" evidence="5">
    <location>
        <begin position="1460"/>
        <end position="1470"/>
    </location>
</feature>
<feature type="compositionally biased region" description="Polar residues" evidence="5">
    <location>
        <begin position="1486"/>
        <end position="1495"/>
    </location>
</feature>
<feature type="modified residue" description="N-acetylmethionine" evidence="14">
    <location>
        <position position="1"/>
    </location>
</feature>
<feature type="modified residue" description="Phosphoserine" evidence="11">
    <location>
        <position position="311"/>
    </location>
</feature>
<feature type="modified residue" description="Phosphothreonine" evidence="11">
    <location>
        <position position="315"/>
    </location>
</feature>
<feature type="modified residue" description="Phosphoserine" evidence="11 13 15">
    <location>
        <position position="325"/>
    </location>
</feature>
<feature type="modified residue" description="Phosphothreonine" evidence="15">
    <location>
        <position position="338"/>
    </location>
</feature>
<feature type="modified residue" description="Phosphoserine" evidence="13">
    <location>
        <position position="355"/>
    </location>
</feature>
<feature type="modified residue" description="Phosphoserine" evidence="12 13">
    <location>
        <position position="358"/>
    </location>
</feature>
<feature type="modified residue" description="Phosphothreonine" evidence="11">
    <location>
        <position position="388"/>
    </location>
</feature>
<feature type="modified residue" description="Phosphoserine" evidence="11 12">
    <location>
        <position position="398"/>
    </location>
</feature>
<feature type="modified residue" description="Phosphoserine" evidence="11 15 16">
    <location>
        <position position="471"/>
    </location>
</feature>
<feature type="modified residue" description="Phosphoserine" evidence="16">
    <location>
        <position position="476"/>
    </location>
</feature>
<feature type="modified residue" description="Phosphoserine" evidence="11 12 13 15">
    <location>
        <position position="548"/>
    </location>
</feature>
<feature type="modified residue" description="Phosphoserine" evidence="11">
    <location>
        <position position="564"/>
    </location>
</feature>
<feature type="modified residue" description="Phosphoserine" evidence="11 13 15">
    <location>
        <position position="578"/>
    </location>
</feature>
<feature type="modified residue" description="Phosphoserine" evidence="11">
    <location>
        <position position="588"/>
    </location>
</feature>
<feature type="modified residue" description="Phosphoserine" evidence="3">
    <location>
        <position position="638"/>
    </location>
</feature>
<feature type="modified residue" description="Phosphoserine" evidence="9 12 13 15">
    <location>
        <position position="680"/>
    </location>
</feature>
<feature type="modified residue" description="Phosphoserine" evidence="3">
    <location>
        <position position="702"/>
    </location>
</feature>
<feature type="modified residue" description="Phosphoserine" evidence="11 13">
    <location>
        <position position="746"/>
    </location>
</feature>
<feature type="modified residue" description="Phosphoserine" evidence="11 13 15 16">
    <location>
        <position position="768"/>
    </location>
</feature>
<feature type="modified residue" description="Phosphoserine" evidence="13">
    <location>
        <position position="790"/>
    </location>
</feature>
<feature type="modified residue" description="Phosphoserine" evidence="13">
    <location>
        <position position="820"/>
    </location>
</feature>
<feature type="modified residue" description="Phosphoserine" evidence="13">
    <location>
        <position position="831"/>
    </location>
</feature>
<feature type="modified residue" description="Phosphoserine" evidence="2">
    <location>
        <position position="842"/>
    </location>
</feature>
<feature type="modified residue" description="Phosphothreonine" evidence="11">
    <location>
        <position position="851"/>
    </location>
</feature>
<feature type="modified residue" description="Phosphoserine" evidence="13">
    <location>
        <position position="894"/>
    </location>
</feature>
<feature type="modified residue" description="Phosphoserine" evidence="11 13 15">
    <location>
        <position position="905"/>
    </location>
</feature>
<feature type="modified residue" description="Phosphoserine" evidence="13">
    <location>
        <position position="913"/>
    </location>
</feature>
<feature type="modified residue" description="Phosphoserine" evidence="13">
    <location>
        <position position="934"/>
    </location>
</feature>
<feature type="modified residue" description="Phosphoserine" evidence="16">
    <location>
        <position position="1016"/>
    </location>
</feature>
<feature type="modified residue" description="Phosphoserine" evidence="13">
    <location>
        <position position="1261"/>
    </location>
</feature>
<feature type="modified residue" description="Phosphoserine" evidence="13">
    <location>
        <position position="1282"/>
    </location>
</feature>
<feature type="modified residue" description="Phosphoserine" evidence="13">
    <location>
        <position position="1286"/>
    </location>
</feature>
<feature type="modified residue" description="Phosphoserine" evidence="3">
    <location>
        <position position="1310"/>
    </location>
</feature>
<feature type="modified residue" description="Phosphoserine" evidence="13">
    <location>
        <position position="1347"/>
    </location>
</feature>
<feature type="modified residue" description="Phosphoserine" evidence="9 15">
    <location>
        <position position="1409"/>
    </location>
</feature>
<feature type="modified residue" description="Phosphoserine" evidence="9 10 11 13 15">
    <location>
        <position position="1418"/>
    </location>
</feature>
<feature type="modified residue" description="Phosphoserine" evidence="13">
    <location>
        <position position="1452"/>
    </location>
</feature>
<feature type="modified residue" description="Phosphoserine" evidence="13">
    <location>
        <position position="1496"/>
    </location>
</feature>
<feature type="modified residue" description="Phosphoserine" evidence="13">
    <location>
        <position position="1498"/>
    </location>
</feature>
<feature type="modified residue" description="Phosphoserine" evidence="13 16">
    <location>
        <position position="1577"/>
    </location>
</feature>
<feature type="modified residue" description="Phosphoserine" evidence="13">
    <location>
        <position position="1617"/>
    </location>
</feature>
<feature type="modified residue" description="Phosphoserine" evidence="13">
    <location>
        <position position="1618"/>
    </location>
</feature>
<feature type="cross-link" description="Glycyl lysine isopeptide (Lys-Gly) (interchain with G-Cter in SUMO1); alternate" evidence="17">
    <location>
        <position position="811"/>
    </location>
</feature>
<feature type="cross-link" description="Glycyl lysine isopeptide (Lys-Gly) (interchain with G-Cter in SUMO2); alternate" evidence="18">
    <location>
        <position position="811"/>
    </location>
</feature>
<feature type="sequence variant" id="VAR_061301" description="In dbSNP:rs4278369.">
    <original>V</original>
    <variation>A</variation>
    <location>
        <position position="130"/>
    </location>
</feature>
<feature type="sequence variant" id="VAR_049814" description="In dbSNP:rs951781." evidence="6">
    <original>V</original>
    <variation>I</variation>
    <location>
        <position position="815"/>
    </location>
</feature>
<feature type="sequence variant" id="VAR_049815" description="In dbSNP:rs2365718." evidence="7">
    <original>S</original>
    <variation>N</variation>
    <location>
        <position position="1016"/>
    </location>
</feature>
<feature type="sequence variant" id="VAR_049816" description="In dbSNP:rs2886443." evidence="7">
    <original>P</original>
    <variation>L</variation>
    <location>
        <position position="1101"/>
    </location>
</feature>
<feature type="sequence variant" id="VAR_049817" description="In dbSNP:rs17393797.">
    <original>R</original>
    <variation>S</variation>
    <location>
        <position position="1133"/>
    </location>
</feature>
<feature type="sequence variant" id="VAR_049818" description="In dbSNP:rs3748570." evidence="7 11 13">
    <original>P</original>
    <variation>L</variation>
    <location>
        <position position="1275"/>
    </location>
</feature>
<feature type="sequence conflict" description="In Ref. 1; CAA46780." evidence="8" ref="1">
    <original>A</original>
    <variation>G</variation>
    <location>
        <position position="24"/>
    </location>
</feature>
<feature type="sequence conflict" description="In Ref. 1; CAA46780." evidence="8" ref="1">
    <original>E</original>
    <variation>G</variation>
    <location>
        <position position="39"/>
    </location>
</feature>
<feature type="sequence conflict" description="In Ref. 1; CAA46780." evidence="8" ref="1">
    <original>A</original>
    <variation>R</variation>
    <location>
        <position position="45"/>
    </location>
</feature>
<feature type="sequence conflict" description="In Ref. 1; CAA46780." evidence="8" ref="1">
    <original>Q</original>
    <variation>E</variation>
    <location>
        <position position="96"/>
    </location>
</feature>
<feature type="sequence conflict" description="In Ref. 1; CAA46780." evidence="8" ref="1">
    <original>V</original>
    <variation>G</variation>
    <location>
        <position position="130"/>
    </location>
</feature>
<feature type="sequence conflict" description="In Ref. 1; CAA46780." evidence="8" ref="1">
    <original>C</original>
    <variation>L</variation>
    <location>
        <position position="161"/>
    </location>
</feature>
<feature type="sequence conflict" description="In Ref. 1; CAA46780." evidence="8" ref="1">
    <location>
        <position position="167"/>
    </location>
</feature>
<feature type="sequence conflict" description="In Ref. 1; CAA46780." evidence="8" ref="1">
    <original>GQA</original>
    <variation>DQT</variation>
    <location>
        <begin position="205"/>
        <end position="207"/>
    </location>
</feature>
<feature type="sequence conflict" description="In Ref. 1; CAA46780." evidence="8" ref="1">
    <original>G</original>
    <variation>A</variation>
    <location>
        <position position="212"/>
    </location>
</feature>
<feature type="sequence conflict" description="In Ref. 1; CAA46780." evidence="8" ref="1">
    <original>G</original>
    <variation>V</variation>
    <location>
        <position position="221"/>
    </location>
</feature>
<feature type="sequence conflict" description="In Ref. 1; CAA46780." evidence="8" ref="1">
    <original>ELLKDVEVVRPLEKEAVG</original>
    <variation>RAIKGCGGSETSRKRGCR</variation>
    <location>
        <begin position="595"/>
        <end position="612"/>
    </location>
</feature>
<feature type="sequence conflict" description="In Ref. 1; CAA46780." evidence="8" ref="1">
    <original>QGAMNPLEKEIQEPLESVEVNQETFRLLEEENQESLRSLGAWNLENLRSPEE</original>
    <variation>KSGGNESSRKGNSRTTGVCGSEPRDIQTPGRGESGIIEISGSMEPGEFEISRG</variation>
    <location>
        <begin position="857"/>
        <end position="908"/>
    </location>
</feature>
<feature type="sequence conflict" description="In Ref. 1; CAA46780." evidence="8" ref="1">
    <original>E</original>
    <variation>K</variation>
    <location>
        <position position="975"/>
    </location>
</feature>
<feature type="sequence conflict" description="In Ref. 1; CAA46780." evidence="8" ref="1">
    <original>I</original>
    <variation>F</variation>
    <location>
        <position position="1008"/>
    </location>
</feature>
<feature type="sequence conflict" description="In Ref. 1; CAA46780." evidence="8" ref="1">
    <original>A</original>
    <variation>T</variation>
    <location>
        <position position="1050"/>
    </location>
</feature>
<feature type="sequence conflict" description="In Ref. 1; CAA46780." evidence="8" ref="1">
    <original>P</original>
    <variation>L</variation>
    <location>
        <position position="1235"/>
    </location>
</feature>
<feature type="sequence conflict" description="In Ref. 1; CAA46780." evidence="8" ref="1">
    <location>
        <position position="1256"/>
    </location>
</feature>
<feature type="sequence conflict" description="In Ref. 1; CAA46780." evidence="8" ref="1">
    <original>DPTGEQRPPPQG</original>
    <variation>TPLESRGHPLK</variation>
    <location>
        <begin position="1314"/>
        <end position="1325"/>
    </location>
</feature>
<feature type="sequence conflict" description="In Ref. 1; CAA46780." evidence="8" ref="1">
    <original>AP</original>
    <variation>E</variation>
    <location>
        <begin position="1344"/>
        <end position="1345"/>
    </location>
</feature>
<feature type="sequence conflict" description="In Ref. 4; BAE45713." evidence="8" ref="4">
    <original>S</original>
    <variation>N</variation>
    <location>
        <position position="1472"/>
    </location>
</feature>
<feature type="sequence conflict" description="In Ref. 4; BAE45713." evidence="8" ref="4">
    <original>L</original>
    <variation>M</variation>
    <location>
        <position position="1542"/>
    </location>
</feature>
<feature type="sequence conflict" description="In Ref. 1; CAA46780." evidence="8" ref="1">
    <original>VGQGMP</original>
    <variation>SGARNA</variation>
    <location>
        <begin position="1563"/>
        <end position="1568"/>
    </location>
</feature>
<feature type="sequence conflict" description="In Ref. 1; CAA46780." evidence="8" ref="1">
    <original>TSW</original>
    <variation>RSS</variation>
    <location>
        <begin position="1589"/>
        <end position="1591"/>
    </location>
</feature>
<proteinExistence type="evidence at protein level"/>
<name>NEST_HUMAN</name>
<accession>P48681</accession>
<accession>O00552</accession>
<accession>Q3LIF5</accession>
<accession>Q5SYZ6</accession>
<keyword id="KW-0007">Acetylation</keyword>
<keyword id="KW-0175">Coiled coil</keyword>
<keyword id="KW-0217">Developmental protein</keyword>
<keyword id="KW-0403">Intermediate filament</keyword>
<keyword id="KW-1017">Isopeptide bond</keyword>
<keyword id="KW-0524">Neurogenesis</keyword>
<keyword id="KW-0597">Phosphoprotein</keyword>
<keyword id="KW-1267">Proteomics identification</keyword>
<keyword id="KW-1185">Reference proteome</keyword>
<keyword id="KW-0832">Ubl conjugation</keyword>
<gene>
    <name type="primary">NES</name>
    <name type="ORF">Nbla00170</name>
</gene>
<comment type="function">
    <text evidence="1">Required for brain and eye development. Promotes the disassembly of phosphorylated vimentin intermediate filaments (IF) during mitosis and may play a role in the trafficking and distribution of IF proteins and other cellular factors to daughter cells during progenitor cell division. Required for survival, renewal and mitogen-stimulated proliferation of neural progenitor cells (By similarity).</text>
</comment>
<comment type="subunit">
    <text evidence="1">Forms homodimers and homotetramers in vitro. In mixtures with other intermediate filament proteins such as vimentin and alpha-internexin, tis protein preferentially forms heterodimers which can assemble to form intermediate filaments if nestin does not exceed 25%. Interacts with FHOD3 (By similarity).</text>
</comment>
<comment type="interaction">
    <interactant intactId="EBI-10966836">
        <id>P48681</id>
    </interactant>
    <interactant intactId="EBI-353844">
        <id>P08670</id>
        <label>VIM</label>
    </interactant>
    <organismsDiffer>false</organismsDiffer>
    <experiments>5</experiments>
</comment>
<comment type="tissue specificity">
    <text>CNS stem cells.</text>
</comment>
<comment type="developmental stage">
    <text>Upon terminal neural differentiation, nestin is down-regulated and replaced by neurofilaments.</text>
</comment>
<comment type="PTM">
    <text evidence="1">Constitutively phosphorylated. This increases during mitosis when the cytoplasmic intermediate filament network is reorganized (By similarity).</text>
</comment>
<comment type="similarity">
    <text evidence="4">Belongs to the intermediate filament family.</text>
</comment>
<evidence type="ECO:0000250" key="1"/>
<evidence type="ECO:0000250" key="2">
    <source>
        <dbReference type="UniProtKB" id="P21263"/>
    </source>
</evidence>
<evidence type="ECO:0000250" key="3">
    <source>
        <dbReference type="UniProtKB" id="Q6P5H2"/>
    </source>
</evidence>
<evidence type="ECO:0000255" key="4">
    <source>
        <dbReference type="PROSITE-ProRule" id="PRU01188"/>
    </source>
</evidence>
<evidence type="ECO:0000256" key="5">
    <source>
        <dbReference type="SAM" id="MobiDB-lite"/>
    </source>
</evidence>
<evidence type="ECO:0000269" key="6">
    <source>
    </source>
</evidence>
<evidence type="ECO:0000269" key="7">
    <source>
    </source>
</evidence>
<evidence type="ECO:0000305" key="8"/>
<evidence type="ECO:0007744" key="9">
    <source>
    </source>
</evidence>
<evidence type="ECO:0007744" key="10">
    <source>
    </source>
</evidence>
<evidence type="ECO:0007744" key="11">
    <source>
    </source>
</evidence>
<evidence type="ECO:0007744" key="12">
    <source>
    </source>
</evidence>
<evidence type="ECO:0007744" key="13">
    <source>
    </source>
</evidence>
<evidence type="ECO:0007744" key="14">
    <source>
    </source>
</evidence>
<evidence type="ECO:0007744" key="15">
    <source>
    </source>
</evidence>
<evidence type="ECO:0007744" key="16">
    <source>
    </source>
</evidence>
<evidence type="ECO:0007744" key="17">
    <source>
    </source>
</evidence>
<evidence type="ECO:0007744" key="18">
    <source>
    </source>
</evidence>
<sequence>MEGCMGEESFQMWELNRRLEAYLARVKALEEQNELLSAELGGLRAQSADTSWRAHADDELAALRALVDQRWREKHAAEVARDNLAEELEGVAGRCQQLRLARERTTEEVARNRRAVEAEKCARAWLSSQVAELERELEALRVAHEEERVGLNAQAACAPRCPAPPRGPPAPAPEVEELARRLGEAWRGAVRGYQERVAHMETSLGQARERLGRAVQGAREGRLELQQLQAERGGLLERRAALEQRLEGRWQERLRATEKFQLAVEALEQEKQGLQSQIAQVLEGRQQLAHLKMSLSLEVATYRTLLEAENSRLQTPGGGSKTSLSFQDPKLELQFPRTPEGRRLGSLLPVLSPTSLPSPLPATLETPVPAFLKNQEFLQARTPTLASTPIPPTPQAPSPAVDAEIRAQDAPLSLLQTQGGRKQAPEPLRAEARVAIPASVLPGPEEPGGQRQEASTGQSPEDHASLAPPLSPDHSSLEAKDGESGGSRVFSICRGEGEGQIWGLVEKETAIEGKVVSSLQQEIWEEEDLNRKEIQDSQVPLEKETLKSLGEEIQESLKTLENQSHETLERENQECPRSLEEDLETLKSLEKENKELLKDVEVVRPLEKEAVGQLKPTGKEDTQTLQSLQKENQELMKSLEGNLETFLFPGTENQELVSSLQENLESLTALEKENQEPLRSPEVGDEEALRPLTKENQEPLRSLEDENKEAFRSLEKENQEPLKTLEEEDQSIVRPLETENHKSLRSLEEQDQETLRTLEKETQQRRRSLGEQDQMTLRPPEKVDLEPLKSLDQEIARPLENENQEFLKSLKEESVEAVKSLETEILESLKSAGQENLETLKSPETQAPLWTPEEINQGAMNPLEKEIQEPLESVEVNQETFRLLEEENQESLRSLGAWNLENLRSPEEVDKESQRNLEEEENLGKGEYQESLRSLEEEGQELPQSADVQRWEDTVEKDQELAQESPPGMAGVENEDEAELNLREQDGFTGKEEVVEQGELNATEEVWIPGEGHPESPEPKEQRGLVEGASVKGGAEGLQDPEGQSQQVGAPGLQAPQGLPEAIEPLVEDDVAPGGDQASPEVMLGSEPAMGESAAGAEPGPGQGVGGLGDPGHLTREEVMEPPLEEESLEAKRVQGLEGPRKDLEEAGGLGTEFSELPGKSRDPWEPPREGREESEAEAPRGAEEAFPAETLGHTGSDAPSPWPLGSEEAEEDVPPVLVSPSPTYTPILEDAPGPQPQAEGSQEASWGVQGRAEALGKVESEQEELGSGEIPEGPQEEGEESREESEEDELGETLPDSTPLGFYLRSPTSPRWDPTGEQRPPPQGETGKEGWDPAVLASEGLEAPPSEKEEGEEGEEECGRDSDLSEEFEDLGTEAPFLPGVPGEVAEPLGQVPQLLLDPAAWDRDGESDGFADEEESGEEGEEDQEEGREPGAGRWGPGSSVGSLQALSSSQRGEFLESDSVSVSVPWDDSLRGAVAGAPKTALETESQDSAEPSGSEEESDPVSLEREDKVPGPLEIPSGMEDAGPGADIIGVNGQGPNLEGKSQHVNGGVMNGLEQSEEVGQGMPLVSEGDRGSPFQEEEGSALKTSWAGAPVHLGQGQFLKFTQREGDRESWSSGED</sequence>
<organism>
    <name type="scientific">Homo sapiens</name>
    <name type="common">Human</name>
    <dbReference type="NCBI Taxonomy" id="9606"/>
    <lineage>
        <taxon>Eukaryota</taxon>
        <taxon>Metazoa</taxon>
        <taxon>Chordata</taxon>
        <taxon>Craniata</taxon>
        <taxon>Vertebrata</taxon>
        <taxon>Euteleostomi</taxon>
        <taxon>Mammalia</taxon>
        <taxon>Eutheria</taxon>
        <taxon>Euarchontoglires</taxon>
        <taxon>Primates</taxon>
        <taxon>Haplorrhini</taxon>
        <taxon>Catarrhini</taxon>
        <taxon>Hominidae</taxon>
        <taxon>Homo</taxon>
    </lineage>
</organism>
<dbReference type="EMBL" id="AL590666">
    <property type="status" value="NOT_ANNOTATED_CDS"/>
    <property type="molecule type" value="Genomic_DNA"/>
</dbReference>
<dbReference type="EMBL" id="X65964">
    <property type="protein sequence ID" value="CAA46780.1"/>
    <property type="molecule type" value="Genomic_DNA"/>
</dbReference>
<dbReference type="EMBL" id="AF004335">
    <property type="protein sequence ID" value="AAB64426.1"/>
    <property type="molecule type" value="Genomic_DNA"/>
</dbReference>
<dbReference type="EMBL" id="AB073350">
    <property type="protein sequence ID" value="BAE45713.1"/>
    <property type="molecule type" value="mRNA"/>
</dbReference>
<dbReference type="CCDS" id="CCDS1151.1"/>
<dbReference type="PIR" id="S21424">
    <property type="entry name" value="S21424"/>
</dbReference>
<dbReference type="RefSeq" id="NP_006608.1">
    <property type="nucleotide sequence ID" value="NM_006617.2"/>
</dbReference>
<dbReference type="SMR" id="P48681"/>
<dbReference type="BioGRID" id="115983">
    <property type="interactions" value="150"/>
</dbReference>
<dbReference type="FunCoup" id="P48681">
    <property type="interactions" value="367"/>
</dbReference>
<dbReference type="IntAct" id="P48681">
    <property type="interactions" value="114"/>
</dbReference>
<dbReference type="MINT" id="P48681"/>
<dbReference type="STRING" id="9606.ENSP00000357206"/>
<dbReference type="GlyGen" id="P48681">
    <property type="glycosylation" value="3 sites, 1 O-linked glycan (1 site)"/>
</dbReference>
<dbReference type="iPTMnet" id="P48681"/>
<dbReference type="MetOSite" id="P48681"/>
<dbReference type="PhosphoSitePlus" id="P48681"/>
<dbReference type="SwissPalm" id="P48681"/>
<dbReference type="BioMuta" id="NES"/>
<dbReference type="DMDM" id="146345464"/>
<dbReference type="jPOST" id="P48681"/>
<dbReference type="MassIVE" id="P48681"/>
<dbReference type="PaxDb" id="9606-ENSP00000357206"/>
<dbReference type="PeptideAtlas" id="P48681"/>
<dbReference type="ProteomicsDB" id="55923"/>
<dbReference type="Pumba" id="P48681"/>
<dbReference type="Antibodypedia" id="1658">
    <property type="antibodies" value="1100 antibodies from 49 providers"/>
</dbReference>
<dbReference type="DNASU" id="10763"/>
<dbReference type="Ensembl" id="ENST00000368223.4">
    <property type="protein sequence ID" value="ENSP00000357206.3"/>
    <property type="gene ID" value="ENSG00000132688.11"/>
</dbReference>
<dbReference type="GeneID" id="10763"/>
<dbReference type="KEGG" id="hsa:10763"/>
<dbReference type="MANE-Select" id="ENST00000368223.4">
    <property type="protein sequence ID" value="ENSP00000357206.3"/>
    <property type="RefSeq nucleotide sequence ID" value="NM_006617.2"/>
    <property type="RefSeq protein sequence ID" value="NP_006608.1"/>
</dbReference>
<dbReference type="UCSC" id="uc001fpq.4">
    <property type="organism name" value="human"/>
</dbReference>
<dbReference type="AGR" id="HGNC:7756"/>
<dbReference type="CTD" id="10763"/>
<dbReference type="DisGeNET" id="10763"/>
<dbReference type="GeneCards" id="NES"/>
<dbReference type="HGNC" id="HGNC:7756">
    <property type="gene designation" value="NES"/>
</dbReference>
<dbReference type="HPA" id="ENSG00000132688">
    <property type="expression patterns" value="Tissue enhanced (heart)"/>
</dbReference>
<dbReference type="MIM" id="600915">
    <property type="type" value="gene"/>
</dbReference>
<dbReference type="neXtProt" id="NX_P48681"/>
<dbReference type="OpenTargets" id="ENSG00000132688"/>
<dbReference type="PharmGKB" id="PA31556"/>
<dbReference type="VEuPathDB" id="HostDB:ENSG00000132688"/>
<dbReference type="eggNOG" id="ENOG502RYFK">
    <property type="taxonomic scope" value="Eukaryota"/>
</dbReference>
<dbReference type="GeneTree" id="ENSGT00940000162240"/>
<dbReference type="HOGENOM" id="CLU_003317_0_0_1"/>
<dbReference type="InParanoid" id="P48681"/>
<dbReference type="OMA" id="CQEVENQ"/>
<dbReference type="OrthoDB" id="8886319at2759"/>
<dbReference type="PAN-GO" id="P48681">
    <property type="GO annotations" value="3 GO annotations based on evolutionary models"/>
</dbReference>
<dbReference type="PhylomeDB" id="P48681"/>
<dbReference type="TreeFam" id="TF336633"/>
<dbReference type="PathwayCommons" id="P48681"/>
<dbReference type="SignaLink" id="P48681"/>
<dbReference type="SIGNOR" id="P48681"/>
<dbReference type="BioGRID-ORCS" id="10763">
    <property type="hits" value="17 hits in 1156 CRISPR screens"/>
</dbReference>
<dbReference type="ChiTaRS" id="NES">
    <property type="organism name" value="human"/>
</dbReference>
<dbReference type="GeneWiki" id="Nestin_(protein)"/>
<dbReference type="GenomeRNAi" id="10763"/>
<dbReference type="Pharos" id="P48681">
    <property type="development level" value="Tbio"/>
</dbReference>
<dbReference type="PRO" id="PR:P48681"/>
<dbReference type="Proteomes" id="UP000005640">
    <property type="component" value="Chromosome 1"/>
</dbReference>
<dbReference type="RNAct" id="P48681">
    <property type="molecule type" value="protein"/>
</dbReference>
<dbReference type="Bgee" id="ENSG00000132688">
    <property type="expression patterns" value="Expressed in ventricular zone and 177 other cell types or tissues"/>
</dbReference>
<dbReference type="GO" id="GO:0005737">
    <property type="term" value="C:cytoplasm"/>
    <property type="evidence" value="ECO:0000314"/>
    <property type="project" value="DFLAT"/>
</dbReference>
<dbReference type="GO" id="GO:0005882">
    <property type="term" value="C:intermediate filament"/>
    <property type="evidence" value="ECO:0000318"/>
    <property type="project" value="GO_Central"/>
</dbReference>
<dbReference type="GO" id="GO:0045111">
    <property type="term" value="C:intermediate filament cytoskeleton"/>
    <property type="evidence" value="ECO:0000314"/>
    <property type="project" value="HPA"/>
</dbReference>
<dbReference type="GO" id="GO:0031730">
    <property type="term" value="F:CCR5 chemokine receptor binding"/>
    <property type="evidence" value="ECO:0000318"/>
    <property type="project" value="GO_Central"/>
</dbReference>
<dbReference type="GO" id="GO:0019215">
    <property type="term" value="F:intermediate filament binding"/>
    <property type="evidence" value="ECO:0000250"/>
    <property type="project" value="UniProtKB"/>
</dbReference>
<dbReference type="GO" id="GO:0007420">
    <property type="term" value="P:brain development"/>
    <property type="evidence" value="ECO:0000250"/>
    <property type="project" value="UniProtKB"/>
</dbReference>
<dbReference type="GO" id="GO:0048858">
    <property type="term" value="P:cell projection morphogenesis"/>
    <property type="evidence" value="ECO:0007669"/>
    <property type="project" value="Ensembl"/>
</dbReference>
<dbReference type="GO" id="GO:0007417">
    <property type="term" value="P:central nervous system development"/>
    <property type="evidence" value="ECO:0000303"/>
    <property type="project" value="UniProtKB"/>
</dbReference>
<dbReference type="GO" id="GO:0031076">
    <property type="term" value="P:embryonic camera-type eye development"/>
    <property type="evidence" value="ECO:0000250"/>
    <property type="project" value="UniProtKB"/>
</dbReference>
<dbReference type="GO" id="GO:0000086">
    <property type="term" value="P:G2/M transition of mitotic cell cycle"/>
    <property type="evidence" value="ECO:0000314"/>
    <property type="project" value="DFLAT"/>
</dbReference>
<dbReference type="GO" id="GO:0043086">
    <property type="term" value="P:negative regulation of catalytic activity"/>
    <property type="evidence" value="ECO:0000314"/>
    <property type="project" value="UniProtKB"/>
</dbReference>
<dbReference type="GO" id="GO:0043524">
    <property type="term" value="P:negative regulation of neuron apoptotic process"/>
    <property type="evidence" value="ECO:0007669"/>
    <property type="project" value="Ensembl"/>
</dbReference>
<dbReference type="GO" id="GO:0032091">
    <property type="term" value="P:negative regulation of protein binding"/>
    <property type="evidence" value="ECO:0000314"/>
    <property type="project" value="UniProtKB"/>
</dbReference>
<dbReference type="GO" id="GO:0051402">
    <property type="term" value="P:neuron apoptotic process"/>
    <property type="evidence" value="ECO:0007669"/>
    <property type="project" value="Ensembl"/>
</dbReference>
<dbReference type="GO" id="GO:0030844">
    <property type="term" value="P:positive regulation of intermediate filament depolymerization"/>
    <property type="evidence" value="ECO:0000250"/>
    <property type="project" value="UniProtKB"/>
</dbReference>
<dbReference type="GO" id="GO:2000179">
    <property type="term" value="P:positive regulation of neural precursor cell proliferation"/>
    <property type="evidence" value="ECO:0000250"/>
    <property type="project" value="UniProtKB"/>
</dbReference>
<dbReference type="GO" id="GO:0072089">
    <property type="term" value="P:stem cell proliferation"/>
    <property type="evidence" value="ECO:0000315"/>
    <property type="project" value="DFLAT"/>
</dbReference>
<dbReference type="FunFam" id="1.20.5.170:FF:000081">
    <property type="entry name" value="Nestin"/>
    <property type="match status" value="1"/>
</dbReference>
<dbReference type="FunFam" id="1.20.5.1160:FF:000018">
    <property type="entry name" value="nestin"/>
    <property type="match status" value="1"/>
</dbReference>
<dbReference type="Gene3D" id="1.20.5.170">
    <property type="match status" value="1"/>
</dbReference>
<dbReference type="Gene3D" id="1.20.5.1160">
    <property type="entry name" value="Vasodilator-stimulated phosphoprotein"/>
    <property type="match status" value="1"/>
</dbReference>
<dbReference type="InterPro" id="IPR018039">
    <property type="entry name" value="IF_conserved"/>
</dbReference>
<dbReference type="InterPro" id="IPR039008">
    <property type="entry name" value="IF_rod_dom"/>
</dbReference>
<dbReference type="InterPro" id="IPR031211">
    <property type="entry name" value="Nestin"/>
</dbReference>
<dbReference type="PANTHER" id="PTHR47051">
    <property type="entry name" value="NESTIN"/>
    <property type="match status" value="1"/>
</dbReference>
<dbReference type="PANTHER" id="PTHR47051:SF1">
    <property type="entry name" value="NESTIN"/>
    <property type="match status" value="1"/>
</dbReference>
<dbReference type="Pfam" id="PF00038">
    <property type="entry name" value="Filament"/>
    <property type="match status" value="2"/>
</dbReference>
<dbReference type="SMART" id="SM01391">
    <property type="entry name" value="Filament"/>
    <property type="match status" value="1"/>
</dbReference>
<dbReference type="SUPFAM" id="SSF64593">
    <property type="entry name" value="Intermediate filament protein, coiled coil region"/>
    <property type="match status" value="2"/>
</dbReference>
<dbReference type="PROSITE" id="PS00226">
    <property type="entry name" value="IF_ROD_1"/>
    <property type="match status" value="1"/>
</dbReference>
<dbReference type="PROSITE" id="PS51842">
    <property type="entry name" value="IF_ROD_2"/>
    <property type="match status" value="1"/>
</dbReference>
<reference key="1">
    <citation type="journal article" date="1992" name="J. Cell Sci.">
        <title>Characterization of the human nestin gene reveals a close evolutionary relationship to neurofilaments.</title>
        <authorList>
            <person name="Dahlstrand J."/>
            <person name="McKay R.D.G."/>
            <person name="Zimmerman L.B."/>
            <person name="Lendahl U."/>
        </authorList>
    </citation>
    <scope>NUCLEOTIDE SEQUENCE [GENOMIC DNA]</scope>
    <scope>VARIANTS ASN-1016; LEU-1101 AND LEU-1275</scope>
    <source>
        <tissue>Placenta</tissue>
    </source>
</reference>
<reference key="2">
    <citation type="journal article" date="2006" name="Nature">
        <title>The DNA sequence and biological annotation of human chromosome 1.</title>
        <authorList>
            <person name="Gregory S.G."/>
            <person name="Barlow K.F."/>
            <person name="McLay K.E."/>
            <person name="Kaul R."/>
            <person name="Swarbreck D."/>
            <person name="Dunham A."/>
            <person name="Scott C.E."/>
            <person name="Howe K.L."/>
            <person name="Woodfine K."/>
            <person name="Spencer C.C.A."/>
            <person name="Jones M.C."/>
            <person name="Gillson C."/>
            <person name="Searle S."/>
            <person name="Zhou Y."/>
            <person name="Kokocinski F."/>
            <person name="McDonald L."/>
            <person name="Evans R."/>
            <person name="Phillips K."/>
            <person name="Atkinson A."/>
            <person name="Cooper R."/>
            <person name="Jones C."/>
            <person name="Hall R.E."/>
            <person name="Andrews T.D."/>
            <person name="Lloyd C."/>
            <person name="Ainscough R."/>
            <person name="Almeida J.P."/>
            <person name="Ambrose K.D."/>
            <person name="Anderson F."/>
            <person name="Andrew R.W."/>
            <person name="Ashwell R.I.S."/>
            <person name="Aubin K."/>
            <person name="Babbage A.K."/>
            <person name="Bagguley C.L."/>
            <person name="Bailey J."/>
            <person name="Beasley H."/>
            <person name="Bethel G."/>
            <person name="Bird C.P."/>
            <person name="Bray-Allen S."/>
            <person name="Brown J.Y."/>
            <person name="Brown A.J."/>
            <person name="Buckley D."/>
            <person name="Burton J."/>
            <person name="Bye J."/>
            <person name="Carder C."/>
            <person name="Chapman J.C."/>
            <person name="Clark S.Y."/>
            <person name="Clarke G."/>
            <person name="Clee C."/>
            <person name="Cobley V."/>
            <person name="Collier R.E."/>
            <person name="Corby N."/>
            <person name="Coville G.J."/>
            <person name="Davies J."/>
            <person name="Deadman R."/>
            <person name="Dunn M."/>
            <person name="Earthrowl M."/>
            <person name="Ellington A.G."/>
            <person name="Errington H."/>
            <person name="Frankish A."/>
            <person name="Frankland J."/>
            <person name="French L."/>
            <person name="Garner P."/>
            <person name="Garnett J."/>
            <person name="Gay L."/>
            <person name="Ghori M.R.J."/>
            <person name="Gibson R."/>
            <person name="Gilby L.M."/>
            <person name="Gillett W."/>
            <person name="Glithero R.J."/>
            <person name="Grafham D.V."/>
            <person name="Griffiths C."/>
            <person name="Griffiths-Jones S."/>
            <person name="Grocock R."/>
            <person name="Hammond S."/>
            <person name="Harrison E.S.I."/>
            <person name="Hart E."/>
            <person name="Haugen E."/>
            <person name="Heath P.D."/>
            <person name="Holmes S."/>
            <person name="Holt K."/>
            <person name="Howden P.J."/>
            <person name="Hunt A.R."/>
            <person name="Hunt S.E."/>
            <person name="Hunter G."/>
            <person name="Isherwood J."/>
            <person name="James R."/>
            <person name="Johnson C."/>
            <person name="Johnson D."/>
            <person name="Joy A."/>
            <person name="Kay M."/>
            <person name="Kershaw J.K."/>
            <person name="Kibukawa M."/>
            <person name="Kimberley A.M."/>
            <person name="King A."/>
            <person name="Knights A.J."/>
            <person name="Lad H."/>
            <person name="Laird G."/>
            <person name="Lawlor S."/>
            <person name="Leongamornlert D.A."/>
            <person name="Lloyd D.M."/>
            <person name="Loveland J."/>
            <person name="Lovell J."/>
            <person name="Lush M.J."/>
            <person name="Lyne R."/>
            <person name="Martin S."/>
            <person name="Mashreghi-Mohammadi M."/>
            <person name="Matthews L."/>
            <person name="Matthews N.S.W."/>
            <person name="McLaren S."/>
            <person name="Milne S."/>
            <person name="Mistry S."/>
            <person name="Moore M.J.F."/>
            <person name="Nickerson T."/>
            <person name="O'Dell C.N."/>
            <person name="Oliver K."/>
            <person name="Palmeiri A."/>
            <person name="Palmer S.A."/>
            <person name="Parker A."/>
            <person name="Patel D."/>
            <person name="Pearce A.V."/>
            <person name="Peck A.I."/>
            <person name="Pelan S."/>
            <person name="Phelps K."/>
            <person name="Phillimore B.J."/>
            <person name="Plumb R."/>
            <person name="Rajan J."/>
            <person name="Raymond C."/>
            <person name="Rouse G."/>
            <person name="Saenphimmachak C."/>
            <person name="Sehra H.K."/>
            <person name="Sheridan E."/>
            <person name="Shownkeen R."/>
            <person name="Sims S."/>
            <person name="Skuce C.D."/>
            <person name="Smith M."/>
            <person name="Steward C."/>
            <person name="Subramanian S."/>
            <person name="Sycamore N."/>
            <person name="Tracey A."/>
            <person name="Tromans A."/>
            <person name="Van Helmond Z."/>
            <person name="Wall M."/>
            <person name="Wallis J.M."/>
            <person name="White S."/>
            <person name="Whitehead S.L."/>
            <person name="Wilkinson J.E."/>
            <person name="Willey D.L."/>
            <person name="Williams H."/>
            <person name="Wilming L."/>
            <person name="Wray P.W."/>
            <person name="Wu Z."/>
            <person name="Coulson A."/>
            <person name="Vaudin M."/>
            <person name="Sulston J.E."/>
            <person name="Durbin R.M."/>
            <person name="Hubbard T."/>
            <person name="Wooster R."/>
            <person name="Dunham I."/>
            <person name="Carter N.P."/>
            <person name="McVean G."/>
            <person name="Ross M.T."/>
            <person name="Harrow J."/>
            <person name="Olson M.V."/>
            <person name="Beck S."/>
            <person name="Rogers J."/>
            <person name="Bentley D.R."/>
        </authorList>
    </citation>
    <scope>NUCLEOTIDE SEQUENCE [LARGE SCALE GENOMIC DNA]</scope>
</reference>
<reference key="3">
    <citation type="journal article" date="1999" name="Dev. Biol.">
        <title>Heterogeneity of neural progenitor cells revealed by enhancers in the nestin gene.</title>
        <authorList>
            <person name="Yaworsky P.J."/>
            <person name="Kappen C."/>
        </authorList>
    </citation>
    <scope>NUCLEOTIDE SEQUENCE [GENOMIC DNA] OF 297-310</scope>
</reference>
<reference key="4">
    <citation type="journal article" date="2003" name="Cancer Lett.">
        <title>Neuroblastoma oligo-capping cDNA project: toward the understanding of the genesis and biology of neuroblastoma.</title>
        <authorList>
            <person name="Ohira M."/>
            <person name="Morohashi A."/>
            <person name="Nakamura Y."/>
            <person name="Isogai E."/>
            <person name="Furuya K."/>
            <person name="Hamano S."/>
            <person name="Machida T."/>
            <person name="Aoyama M."/>
            <person name="Fukumura M."/>
            <person name="Miyazaki K."/>
            <person name="Suzuki Y."/>
            <person name="Sugano S."/>
            <person name="Hirato J."/>
            <person name="Nakagawara A."/>
        </authorList>
    </citation>
    <scope>NUCLEOTIDE SEQUENCE [LARGE SCALE MRNA] OF 604-1621</scope>
    <scope>VARIANT ILE-815</scope>
    <source>
        <tissue>Neuroblastoma</tissue>
    </source>
</reference>
<reference key="5">
    <citation type="journal article" date="2006" name="Cell">
        <title>Global, in vivo, and site-specific phosphorylation dynamics in signaling networks.</title>
        <authorList>
            <person name="Olsen J.V."/>
            <person name="Blagoev B."/>
            <person name="Gnad F."/>
            <person name="Macek B."/>
            <person name="Kumar C."/>
            <person name="Mortensen P."/>
            <person name="Mann M."/>
        </authorList>
    </citation>
    <scope>PHOSPHORYLATION [LARGE SCALE ANALYSIS] AT SER-680; SER-1409 AND SER-1418</scope>
    <scope>IDENTIFICATION BY MASS SPECTROMETRY [LARGE SCALE ANALYSIS]</scope>
    <source>
        <tissue>Cervix carcinoma</tissue>
    </source>
</reference>
<reference key="6">
    <citation type="journal article" date="2008" name="Proc. Natl. Acad. Sci. U.S.A.">
        <title>A quantitative atlas of mitotic phosphorylation.</title>
        <authorList>
            <person name="Dephoure N."/>
            <person name="Zhou C."/>
            <person name="Villen J."/>
            <person name="Beausoleil S.A."/>
            <person name="Bakalarski C.E."/>
            <person name="Elledge S.J."/>
            <person name="Gygi S.P."/>
        </authorList>
    </citation>
    <scope>PHOSPHORYLATION [LARGE SCALE ANALYSIS] AT SER-311; THR-315; SER-325; THR-388; SER-398; SER-471; SER-548; SER-564; SER-578; SER-588; SER-746; SER-768; THR-851; SER-905 AND SER-1418</scope>
    <scope>VARIANT [LARGE SCALE ANALYSIS] LEU-1275</scope>
    <scope>IDENTIFICATION BY MASS SPECTROMETRY [LARGE SCALE ANALYSIS]</scope>
    <source>
        <tissue>Cervix carcinoma</tissue>
    </source>
</reference>
<reference key="7">
    <citation type="journal article" date="2008" name="Proteomics">
        <title>Large-scale phosphoproteome analysis of human liver tissue by enrichment and fractionation of phosphopeptides with strong anion exchange chromatography.</title>
        <authorList>
            <person name="Han G."/>
            <person name="Ye M."/>
            <person name="Zhou H."/>
            <person name="Jiang X."/>
            <person name="Feng S."/>
            <person name="Jiang X."/>
            <person name="Tian R."/>
            <person name="Wan D."/>
            <person name="Zou H."/>
            <person name="Gu J."/>
        </authorList>
    </citation>
    <scope>PHOSPHORYLATION [LARGE SCALE ANALYSIS] AT SER-1418</scope>
    <scope>IDENTIFICATION BY MASS SPECTROMETRY [LARGE SCALE ANALYSIS]</scope>
    <source>
        <tissue>Liver</tissue>
    </source>
</reference>
<reference key="8">
    <citation type="journal article" date="2009" name="Anal. Chem.">
        <title>Lys-N and trypsin cover complementary parts of the phosphoproteome in a refined SCX-based approach.</title>
        <authorList>
            <person name="Gauci S."/>
            <person name="Helbig A.O."/>
            <person name="Slijper M."/>
            <person name="Krijgsveld J."/>
            <person name="Heck A.J."/>
            <person name="Mohammed S."/>
        </authorList>
    </citation>
    <scope>IDENTIFICATION BY MASS SPECTROMETRY [LARGE SCALE ANALYSIS]</scope>
</reference>
<reference key="9">
    <citation type="journal article" date="2010" name="Sci. Signal.">
        <title>Quantitative phosphoproteomics reveals widespread full phosphorylation site occupancy during mitosis.</title>
        <authorList>
            <person name="Olsen J.V."/>
            <person name="Vermeulen M."/>
            <person name="Santamaria A."/>
            <person name="Kumar C."/>
            <person name="Miller M.L."/>
            <person name="Jensen L.J."/>
            <person name="Gnad F."/>
            <person name="Cox J."/>
            <person name="Jensen T.S."/>
            <person name="Nigg E.A."/>
            <person name="Brunak S."/>
            <person name="Mann M."/>
        </authorList>
    </citation>
    <scope>PHOSPHORYLATION [LARGE SCALE ANALYSIS] AT SER-358; SER-398; SER-548 AND SER-680</scope>
    <scope>IDENTIFICATION BY MASS SPECTROMETRY [LARGE SCALE ANALYSIS]</scope>
    <source>
        <tissue>Cervix carcinoma</tissue>
    </source>
</reference>
<reference key="10">
    <citation type="journal article" date="2011" name="BMC Syst. Biol.">
        <title>Initial characterization of the human central proteome.</title>
        <authorList>
            <person name="Burkard T.R."/>
            <person name="Planyavsky M."/>
            <person name="Kaupe I."/>
            <person name="Breitwieser F.P."/>
            <person name="Buerckstuemmer T."/>
            <person name="Bennett K.L."/>
            <person name="Superti-Furga G."/>
            <person name="Colinge J."/>
        </authorList>
    </citation>
    <scope>IDENTIFICATION BY MASS SPECTROMETRY [LARGE SCALE ANALYSIS]</scope>
</reference>
<reference key="11">
    <citation type="journal article" date="2011" name="Sci. Signal.">
        <title>System-wide temporal characterization of the proteome and phosphoproteome of human embryonic stem cell differentiation.</title>
        <authorList>
            <person name="Rigbolt K.T."/>
            <person name="Prokhorova T.A."/>
            <person name="Akimov V."/>
            <person name="Henningsen J."/>
            <person name="Johansen P.T."/>
            <person name="Kratchmarova I."/>
            <person name="Kassem M."/>
            <person name="Mann M."/>
            <person name="Olsen J.V."/>
            <person name="Blagoev B."/>
        </authorList>
    </citation>
    <scope>PHOSPHORYLATION [LARGE SCALE ANALYSIS] AT SER-325; SER-355; SER-358; SER-548; SER-578; SER-680; SER-746; SER-768; SER-790; SER-820; SER-831; SER-894; SER-905; SER-913; SER-934; SER-1261; SER-1282; SER-1286; SER-1347; SER-1418; SER-1452; SER-1496; SER-1498; SER-1577; SER-1617 AND SER-1618</scope>
    <scope>VARIANT [LARGE SCALE ANALYSIS] LEU-1275</scope>
    <scope>IDENTIFICATION BY MASS SPECTROMETRY [LARGE SCALE ANALYSIS]</scope>
</reference>
<reference key="12">
    <citation type="journal article" date="2012" name="Mol. Cell. Proteomics">
        <title>Comparative large-scale characterisation of plant vs. mammal proteins reveals similar and idiosyncratic N-alpha acetylation features.</title>
        <authorList>
            <person name="Bienvenut W.V."/>
            <person name="Sumpton D."/>
            <person name="Martinez A."/>
            <person name="Lilla S."/>
            <person name="Espagne C."/>
            <person name="Meinnel T."/>
            <person name="Giglione C."/>
        </authorList>
    </citation>
    <scope>ACETYLATION [LARGE SCALE ANALYSIS] AT MET-1</scope>
    <scope>IDENTIFICATION BY MASS SPECTROMETRY [LARGE SCALE ANALYSIS]</scope>
</reference>
<reference key="13">
    <citation type="journal article" date="2013" name="J. Proteome Res.">
        <title>Toward a comprehensive characterization of a human cancer cell phosphoproteome.</title>
        <authorList>
            <person name="Zhou H."/>
            <person name="Di Palma S."/>
            <person name="Preisinger C."/>
            <person name="Peng M."/>
            <person name="Polat A.N."/>
            <person name="Heck A.J."/>
            <person name="Mohammed S."/>
        </authorList>
    </citation>
    <scope>PHOSPHORYLATION [LARGE SCALE ANALYSIS] AT SER-325; THR-338; SER-471; SER-548; SER-578; SER-680; SER-768; SER-905; SER-1409 AND SER-1418</scope>
    <scope>IDENTIFICATION BY MASS SPECTROMETRY [LARGE SCALE ANALYSIS]</scope>
    <source>
        <tissue>Cervix carcinoma</tissue>
        <tissue>Erythroleukemia</tissue>
    </source>
</reference>
<reference key="14">
    <citation type="journal article" date="2014" name="J. Proteomics">
        <title>An enzyme assisted RP-RPLC approach for in-depth analysis of human liver phosphoproteome.</title>
        <authorList>
            <person name="Bian Y."/>
            <person name="Song C."/>
            <person name="Cheng K."/>
            <person name="Dong M."/>
            <person name="Wang F."/>
            <person name="Huang J."/>
            <person name="Sun D."/>
            <person name="Wang L."/>
            <person name="Ye M."/>
            <person name="Zou H."/>
        </authorList>
    </citation>
    <scope>PHOSPHORYLATION [LARGE SCALE ANALYSIS] AT SER-471; SER-476; SER-768; SER-1016 AND SER-1577</scope>
    <scope>IDENTIFICATION BY MASS SPECTROMETRY [LARGE SCALE ANALYSIS]</scope>
    <source>
        <tissue>Liver</tissue>
    </source>
</reference>
<reference key="15">
    <citation type="journal article" date="2014" name="Proc. Natl. Acad. Sci. U.S.A.">
        <title>Mapping of SUMO sites and analysis of SUMOylation changes induced by external stimuli.</title>
        <authorList>
            <person name="Impens F."/>
            <person name="Radoshevich L."/>
            <person name="Cossart P."/>
            <person name="Ribet D."/>
        </authorList>
    </citation>
    <scope>SUMOYLATION [LARGE SCALE ANALYSIS] AT LYS-811</scope>
    <scope>IDENTIFICATION BY MASS SPECTROMETRY [LARGE SCALE ANALYSIS]</scope>
</reference>
<reference key="16">
    <citation type="journal article" date="2017" name="Nat. Struct. Mol. Biol.">
        <title>Site-specific mapping of the human SUMO proteome reveals co-modification with phosphorylation.</title>
        <authorList>
            <person name="Hendriks I.A."/>
            <person name="Lyon D."/>
            <person name="Young C."/>
            <person name="Jensen L.J."/>
            <person name="Vertegaal A.C."/>
            <person name="Nielsen M.L."/>
        </authorList>
    </citation>
    <scope>SUMOYLATION [LARGE SCALE ANALYSIS] AT LYS-811</scope>
    <scope>IDENTIFICATION BY MASS SPECTROMETRY [LARGE SCALE ANALYSIS]</scope>
</reference>
<protein>
    <recommendedName>
        <fullName>Nestin</fullName>
    </recommendedName>
</protein>